<name>PDXA_ECTM1</name>
<sequence length="337" mass="35235">MNTQQRFALTPGEPAGIGPDLCLLLAREAQPVPLVAIASLALLAERAQQLGLAIELLEVGPEQWPDSPAAAGSLYVWDTPLAVPAHAGRLDPANAGYVLETLTRAGQGCLDGTFAAMITAPVHKGVINEAGIAFSGHTEFLAELTATEQVVMMLATRGLRVALVTTHLPLKDVAAAITAERLQRVTRILHADLQAKFGIAAPRILVCGLNPHAGEGGHLGREEIEIIEPTLERLRAEGMNLIGPLPADTLFTPKHLEHADAVLAMYHDQGLPVLKFKGFGAALNVTLGLPIIRTSVDHGTALDLAGSGNIDTGSLQVALETAYQMAAATSGKSQAAG</sequence>
<dbReference type="EC" id="1.1.1.262" evidence="1"/>
<dbReference type="EMBL" id="CP000680">
    <property type="protein sequence ID" value="ABP86759.1"/>
    <property type="molecule type" value="Genomic_DNA"/>
</dbReference>
<dbReference type="SMR" id="A4XZJ3"/>
<dbReference type="STRING" id="399739.Pmen_4012"/>
<dbReference type="KEGG" id="pmy:Pmen_4012"/>
<dbReference type="PATRIC" id="fig|399739.8.peg.4064"/>
<dbReference type="eggNOG" id="COG1995">
    <property type="taxonomic scope" value="Bacteria"/>
</dbReference>
<dbReference type="HOGENOM" id="CLU_040168_0_0_6"/>
<dbReference type="OrthoDB" id="9801783at2"/>
<dbReference type="UniPathway" id="UPA00244">
    <property type="reaction ID" value="UER00312"/>
</dbReference>
<dbReference type="GO" id="GO:0005737">
    <property type="term" value="C:cytoplasm"/>
    <property type="evidence" value="ECO:0007669"/>
    <property type="project" value="UniProtKB-SubCell"/>
</dbReference>
<dbReference type="GO" id="GO:0050570">
    <property type="term" value="F:4-hydroxythreonine-4-phosphate dehydrogenase activity"/>
    <property type="evidence" value="ECO:0007669"/>
    <property type="project" value="UniProtKB-UniRule"/>
</dbReference>
<dbReference type="GO" id="GO:0050897">
    <property type="term" value="F:cobalt ion binding"/>
    <property type="evidence" value="ECO:0007669"/>
    <property type="project" value="UniProtKB-UniRule"/>
</dbReference>
<dbReference type="GO" id="GO:0000287">
    <property type="term" value="F:magnesium ion binding"/>
    <property type="evidence" value="ECO:0007669"/>
    <property type="project" value="UniProtKB-UniRule"/>
</dbReference>
<dbReference type="GO" id="GO:0051287">
    <property type="term" value="F:NAD binding"/>
    <property type="evidence" value="ECO:0007669"/>
    <property type="project" value="InterPro"/>
</dbReference>
<dbReference type="GO" id="GO:0008270">
    <property type="term" value="F:zinc ion binding"/>
    <property type="evidence" value="ECO:0007669"/>
    <property type="project" value="UniProtKB-UniRule"/>
</dbReference>
<dbReference type="GO" id="GO:0042823">
    <property type="term" value="P:pyridoxal phosphate biosynthetic process"/>
    <property type="evidence" value="ECO:0007669"/>
    <property type="project" value="UniProtKB-UniRule"/>
</dbReference>
<dbReference type="GO" id="GO:0008615">
    <property type="term" value="P:pyridoxine biosynthetic process"/>
    <property type="evidence" value="ECO:0007669"/>
    <property type="project" value="UniProtKB-UniRule"/>
</dbReference>
<dbReference type="Gene3D" id="3.40.718.10">
    <property type="entry name" value="Isopropylmalate Dehydrogenase"/>
    <property type="match status" value="1"/>
</dbReference>
<dbReference type="HAMAP" id="MF_00536">
    <property type="entry name" value="PdxA"/>
    <property type="match status" value="1"/>
</dbReference>
<dbReference type="InterPro" id="IPR037510">
    <property type="entry name" value="PdxA"/>
</dbReference>
<dbReference type="InterPro" id="IPR005255">
    <property type="entry name" value="PdxA_fam"/>
</dbReference>
<dbReference type="NCBIfam" id="TIGR00557">
    <property type="entry name" value="pdxA"/>
    <property type="match status" value="1"/>
</dbReference>
<dbReference type="PANTHER" id="PTHR30004">
    <property type="entry name" value="4-HYDROXYTHREONINE-4-PHOSPHATE DEHYDROGENASE"/>
    <property type="match status" value="1"/>
</dbReference>
<dbReference type="PANTHER" id="PTHR30004:SF5">
    <property type="entry name" value="4-HYDROXYTHREONINE-4-PHOSPHATE DEHYDROGENASE"/>
    <property type="match status" value="1"/>
</dbReference>
<dbReference type="Pfam" id="PF04166">
    <property type="entry name" value="PdxA"/>
    <property type="match status" value="1"/>
</dbReference>
<dbReference type="SUPFAM" id="SSF53659">
    <property type="entry name" value="Isocitrate/Isopropylmalate dehydrogenase-like"/>
    <property type="match status" value="1"/>
</dbReference>
<protein>
    <recommendedName>
        <fullName evidence="1">4-hydroxythreonine-4-phosphate dehydrogenase</fullName>
        <ecNumber evidence="1">1.1.1.262</ecNumber>
    </recommendedName>
    <alternativeName>
        <fullName evidence="1">4-(phosphohydroxy)-L-threonine dehydrogenase</fullName>
    </alternativeName>
</protein>
<reference key="1">
    <citation type="submission" date="2007-04" db="EMBL/GenBank/DDBJ databases">
        <title>Complete sequence of Pseudomonas mendocina ymp.</title>
        <authorList>
            <consortium name="US DOE Joint Genome Institute"/>
            <person name="Copeland A."/>
            <person name="Lucas S."/>
            <person name="Lapidus A."/>
            <person name="Barry K."/>
            <person name="Glavina del Rio T."/>
            <person name="Dalin E."/>
            <person name="Tice H."/>
            <person name="Pitluck S."/>
            <person name="Kiss H."/>
            <person name="Brettin T."/>
            <person name="Detter J.C."/>
            <person name="Bruce D."/>
            <person name="Han C."/>
            <person name="Schmutz J."/>
            <person name="Larimer F."/>
            <person name="Land M."/>
            <person name="Hauser L."/>
            <person name="Kyrpides N."/>
            <person name="Mikhailova N."/>
            <person name="Hersman L."/>
            <person name="Dubois J."/>
            <person name="Maurice P."/>
            <person name="Richardson P."/>
        </authorList>
    </citation>
    <scope>NUCLEOTIDE SEQUENCE [LARGE SCALE GENOMIC DNA]</scope>
    <source>
        <strain>ymp</strain>
    </source>
</reference>
<comment type="function">
    <text evidence="1">Catalyzes the NAD(P)-dependent oxidation of 4-(phosphooxy)-L-threonine (HTP) into 2-amino-3-oxo-4-(phosphooxy)butyric acid which spontaneously decarboxylates to form 3-amino-2-oxopropyl phosphate (AHAP).</text>
</comment>
<comment type="catalytic activity">
    <reaction evidence="1">
        <text>4-(phosphooxy)-L-threonine + NAD(+) = 3-amino-2-oxopropyl phosphate + CO2 + NADH</text>
        <dbReference type="Rhea" id="RHEA:32275"/>
        <dbReference type="ChEBI" id="CHEBI:16526"/>
        <dbReference type="ChEBI" id="CHEBI:57279"/>
        <dbReference type="ChEBI" id="CHEBI:57540"/>
        <dbReference type="ChEBI" id="CHEBI:57945"/>
        <dbReference type="ChEBI" id="CHEBI:58452"/>
        <dbReference type="EC" id="1.1.1.262"/>
    </reaction>
</comment>
<comment type="cofactor">
    <cofactor evidence="1">
        <name>Zn(2+)</name>
        <dbReference type="ChEBI" id="CHEBI:29105"/>
    </cofactor>
    <cofactor evidence="1">
        <name>Mg(2+)</name>
        <dbReference type="ChEBI" id="CHEBI:18420"/>
    </cofactor>
    <cofactor evidence="1">
        <name>Co(2+)</name>
        <dbReference type="ChEBI" id="CHEBI:48828"/>
    </cofactor>
    <text evidence="1">Binds 1 divalent metal cation per subunit. Can use ions such as Zn(2+), Mg(2+) or Co(2+).</text>
</comment>
<comment type="pathway">
    <text evidence="1">Cofactor biosynthesis; pyridoxine 5'-phosphate biosynthesis; pyridoxine 5'-phosphate from D-erythrose 4-phosphate: step 4/5.</text>
</comment>
<comment type="subunit">
    <text evidence="1">Homodimer.</text>
</comment>
<comment type="subcellular location">
    <subcellularLocation>
        <location evidence="1">Cytoplasm</location>
    </subcellularLocation>
</comment>
<comment type="miscellaneous">
    <text evidence="1">The active site is located at the dimer interface.</text>
</comment>
<comment type="similarity">
    <text evidence="1">Belongs to the PdxA family.</text>
</comment>
<keyword id="KW-0170">Cobalt</keyword>
<keyword id="KW-0963">Cytoplasm</keyword>
<keyword id="KW-0460">Magnesium</keyword>
<keyword id="KW-0479">Metal-binding</keyword>
<keyword id="KW-0520">NAD</keyword>
<keyword id="KW-0521">NADP</keyword>
<keyword id="KW-0560">Oxidoreductase</keyword>
<keyword id="KW-0664">Pyridoxine biosynthesis</keyword>
<keyword id="KW-0862">Zinc</keyword>
<proteinExistence type="inferred from homology"/>
<feature type="chain" id="PRO_1000051508" description="4-hydroxythreonine-4-phosphate dehydrogenase">
    <location>
        <begin position="1"/>
        <end position="337"/>
    </location>
</feature>
<feature type="binding site" evidence="1">
    <location>
        <position position="137"/>
    </location>
    <ligand>
        <name>substrate</name>
    </ligand>
</feature>
<feature type="binding site" evidence="1">
    <location>
        <position position="138"/>
    </location>
    <ligand>
        <name>substrate</name>
    </ligand>
</feature>
<feature type="binding site" evidence="1">
    <location>
        <position position="167"/>
    </location>
    <ligand>
        <name>a divalent metal cation</name>
        <dbReference type="ChEBI" id="CHEBI:60240"/>
        <note>ligand shared between dimeric partners</note>
    </ligand>
</feature>
<feature type="binding site" evidence="1">
    <location>
        <position position="212"/>
    </location>
    <ligand>
        <name>a divalent metal cation</name>
        <dbReference type="ChEBI" id="CHEBI:60240"/>
        <note>ligand shared between dimeric partners</note>
    </ligand>
</feature>
<feature type="binding site" evidence="1">
    <location>
        <position position="267"/>
    </location>
    <ligand>
        <name>a divalent metal cation</name>
        <dbReference type="ChEBI" id="CHEBI:60240"/>
        <note>ligand shared between dimeric partners</note>
    </ligand>
</feature>
<feature type="binding site" evidence="1">
    <location>
        <position position="275"/>
    </location>
    <ligand>
        <name>substrate</name>
    </ligand>
</feature>
<feature type="binding site" evidence="1">
    <location>
        <position position="284"/>
    </location>
    <ligand>
        <name>substrate</name>
    </ligand>
</feature>
<feature type="binding site" evidence="1">
    <location>
        <position position="293"/>
    </location>
    <ligand>
        <name>substrate</name>
    </ligand>
</feature>
<gene>
    <name evidence="1" type="primary">pdxA</name>
    <name type="ordered locus">Pmen_4012</name>
</gene>
<organism>
    <name type="scientific">Ectopseudomonas mendocina (strain ymp)</name>
    <name type="common">Pseudomonas mendocina</name>
    <dbReference type="NCBI Taxonomy" id="399739"/>
    <lineage>
        <taxon>Bacteria</taxon>
        <taxon>Pseudomonadati</taxon>
        <taxon>Pseudomonadota</taxon>
        <taxon>Gammaproteobacteria</taxon>
        <taxon>Pseudomonadales</taxon>
        <taxon>Pseudomonadaceae</taxon>
        <taxon>Ectopseudomonas</taxon>
    </lineage>
</organism>
<accession>A4XZJ3</accession>
<evidence type="ECO:0000255" key="1">
    <source>
        <dbReference type="HAMAP-Rule" id="MF_00536"/>
    </source>
</evidence>